<organism>
    <name type="scientific">Conus pennaceus</name>
    <name type="common">Feathered cone</name>
    <name type="synonym">Conus episcopus</name>
    <dbReference type="NCBI Taxonomy" id="37335"/>
    <lineage>
        <taxon>Eukaryota</taxon>
        <taxon>Metazoa</taxon>
        <taxon>Spiralia</taxon>
        <taxon>Lophotrochozoa</taxon>
        <taxon>Mollusca</taxon>
        <taxon>Gastropoda</taxon>
        <taxon>Caenogastropoda</taxon>
        <taxon>Neogastropoda</taxon>
        <taxon>Conoidea</taxon>
        <taxon>Conidae</taxon>
        <taxon>Conus</taxon>
        <taxon>Darioconus</taxon>
    </lineage>
</organism>
<reference key="1">
    <citation type="journal article" date="2001" name="Mol. Biol. Evol.">
        <title>Mechanisms for evolving hypervariability: the case of conopeptides.</title>
        <authorList>
            <person name="Conticello S.G."/>
            <person name="Gilad Y."/>
            <person name="Avidan N."/>
            <person name="Ben-Asher E."/>
            <person name="Levy Z."/>
            <person name="Fainzilber M."/>
        </authorList>
    </citation>
    <scope>NUCLEOTIDE SEQUENCE [MRNA]</scope>
    <source>
        <tissue>Venom duct</tissue>
    </source>
</reference>
<dbReference type="EMBL" id="AF193259">
    <property type="protein sequence ID" value="AAF07970.1"/>
    <property type="molecule type" value="mRNA"/>
</dbReference>
<dbReference type="SMR" id="Q9U657"/>
<dbReference type="ConoServer" id="1092">
    <property type="toxin name" value="Pn6.14 precursor"/>
</dbReference>
<dbReference type="GO" id="GO:0005576">
    <property type="term" value="C:extracellular region"/>
    <property type="evidence" value="ECO:0007669"/>
    <property type="project" value="UniProtKB-SubCell"/>
</dbReference>
<dbReference type="GO" id="GO:0008200">
    <property type="term" value="F:ion channel inhibitor activity"/>
    <property type="evidence" value="ECO:0007669"/>
    <property type="project" value="InterPro"/>
</dbReference>
<dbReference type="GO" id="GO:0017080">
    <property type="term" value="F:sodium channel regulator activity"/>
    <property type="evidence" value="ECO:0007669"/>
    <property type="project" value="UniProtKB-KW"/>
</dbReference>
<dbReference type="GO" id="GO:0090729">
    <property type="term" value="F:toxin activity"/>
    <property type="evidence" value="ECO:0007669"/>
    <property type="project" value="UniProtKB-KW"/>
</dbReference>
<dbReference type="InterPro" id="IPR004214">
    <property type="entry name" value="Conotoxin"/>
</dbReference>
<dbReference type="Pfam" id="PF02950">
    <property type="entry name" value="Conotoxin"/>
    <property type="match status" value="1"/>
</dbReference>
<dbReference type="SUPFAM" id="SSF57059">
    <property type="entry name" value="omega toxin-like"/>
    <property type="match status" value="1"/>
</dbReference>
<proteinExistence type="evidence at transcript level"/>
<keyword id="KW-0165">Cleavage on pair of basic residues</keyword>
<keyword id="KW-1015">Disulfide bond</keyword>
<keyword id="KW-0872">Ion channel impairing toxin</keyword>
<keyword id="KW-0960">Knottin</keyword>
<keyword id="KW-0528">Neurotoxin</keyword>
<keyword id="KW-0964">Secreted</keyword>
<keyword id="KW-0732">Signal</keyword>
<keyword id="KW-0800">Toxin</keyword>
<keyword id="KW-0738">Voltage-gated sodium channel impairing toxin</keyword>
<sequence length="83" mass="9259">MNLTCMMIVAVLFLTAWTFVMADDSNNGLANLFSKSRYEMEDPEPSKLEKRKTCQRRWDFCPGALVGVITCCGGLICLGVMCI</sequence>
<feature type="signal peptide" evidence="2">
    <location>
        <begin position="1"/>
        <end position="22"/>
    </location>
</feature>
<feature type="propeptide" id="PRO_0000404742" evidence="1">
    <location>
        <begin position="23"/>
        <end position="50"/>
    </location>
</feature>
<feature type="peptide" id="PRO_0000404743" description="Mu-conotoxin-like PnMKLT1-014">
    <location>
        <begin position="53"/>
        <end position="83"/>
    </location>
</feature>
<feature type="disulfide bond" evidence="1">
    <location>
        <begin position="54"/>
        <end position="72"/>
    </location>
</feature>
<feature type="disulfide bond" evidence="1">
    <location>
        <begin position="61"/>
        <end position="77"/>
    </location>
</feature>
<feature type="disulfide bond" evidence="1">
    <location>
        <begin position="71"/>
        <end position="82"/>
    </location>
</feature>
<protein>
    <recommendedName>
        <fullName>Mu-conotoxin-like PnMKLT1-014</fullName>
    </recommendedName>
</protein>
<accession>Q9U657</accession>
<comment type="function">
    <text evidence="1">Mu-conotoxins block voltage-gated sodium channels (Nav).</text>
</comment>
<comment type="subcellular location">
    <subcellularLocation>
        <location evidence="1">Secreted</location>
    </subcellularLocation>
</comment>
<comment type="tissue specificity">
    <text>Expressed by the venom duct.</text>
</comment>
<comment type="domain">
    <text evidence="1">The presence of a 'disulfide through disulfide knot' structurally defines this protein as a knottin.</text>
</comment>
<comment type="domain">
    <text>The cysteine framework is VI/VII (C-C-CC-C-C).</text>
</comment>
<comment type="similarity">
    <text evidence="3">Belongs to the conotoxin O1 superfamily.</text>
</comment>
<evidence type="ECO:0000250" key="1"/>
<evidence type="ECO:0000255" key="2"/>
<evidence type="ECO:0000305" key="3"/>
<name>O1614_CONPE</name>